<proteinExistence type="evidence at protein level"/>
<name>PGA47_CANAL</name>
<dbReference type="EMBL" id="CP017624">
    <property type="protein sequence ID" value="AOW27933.1"/>
    <property type="molecule type" value="Genomic_DNA"/>
</dbReference>
<dbReference type="RefSeq" id="XP_714572.2">
    <property type="nucleotide sequence ID" value="XM_709479.2"/>
</dbReference>
<dbReference type="BioGRID" id="1226778">
    <property type="interactions" value="11"/>
</dbReference>
<dbReference type="STRING" id="237561.G1UBC2"/>
<dbReference type="GlyCosmos" id="G1UBC2">
    <property type="glycosylation" value="1 site, No reported glycans"/>
</dbReference>
<dbReference type="EnsemblFungi" id="C2_09530W_A-T">
    <property type="protein sequence ID" value="C2_09530W_A-T-p1"/>
    <property type="gene ID" value="C2_09530W_A"/>
</dbReference>
<dbReference type="GeneID" id="3643814"/>
<dbReference type="KEGG" id="cal:CAALFM_C209530WA"/>
<dbReference type="CGD" id="CAL0000175727">
    <property type="gene designation" value="EAP1"/>
</dbReference>
<dbReference type="VEuPathDB" id="FungiDB:C2_09530W_A"/>
<dbReference type="HOGENOM" id="CLU_280330_0_0_1"/>
<dbReference type="InParanoid" id="G1UBC2"/>
<dbReference type="OrthoDB" id="4026762at2759"/>
<dbReference type="PHI-base" id="PHI:11390"/>
<dbReference type="PHI-base" id="PHI:517"/>
<dbReference type="PRO" id="PR:G1UBC2"/>
<dbReference type="Proteomes" id="UP000000559">
    <property type="component" value="Chromosome 2"/>
</dbReference>
<dbReference type="GO" id="GO:0005576">
    <property type="term" value="C:extracellular region"/>
    <property type="evidence" value="ECO:0007669"/>
    <property type="project" value="UniProtKB-KW"/>
</dbReference>
<dbReference type="GO" id="GO:0009277">
    <property type="term" value="C:fungal-type cell wall"/>
    <property type="evidence" value="ECO:0000314"/>
    <property type="project" value="CGD"/>
</dbReference>
<dbReference type="GO" id="GO:0098552">
    <property type="term" value="C:side of membrane"/>
    <property type="evidence" value="ECO:0007669"/>
    <property type="project" value="UniProtKB-KW"/>
</dbReference>
<dbReference type="GO" id="GO:0050839">
    <property type="term" value="F:cell adhesion molecule binding"/>
    <property type="evidence" value="ECO:0000315"/>
    <property type="project" value="CGD"/>
</dbReference>
<dbReference type="GO" id="GO:0044406">
    <property type="term" value="P:adhesion of symbiont to host"/>
    <property type="evidence" value="ECO:0000316"/>
    <property type="project" value="CGD"/>
</dbReference>
<dbReference type="GO" id="GO:0007155">
    <property type="term" value="P:cell adhesion"/>
    <property type="evidence" value="ECO:0000315"/>
    <property type="project" value="CGD"/>
</dbReference>
<dbReference type="GO" id="GO:0098609">
    <property type="term" value="P:cell-cell adhesion"/>
    <property type="evidence" value="ECO:0000314"/>
    <property type="project" value="CGD"/>
</dbReference>
<dbReference type="GO" id="GO:0044407">
    <property type="term" value="P:single-species biofilm formation in or on host organism"/>
    <property type="evidence" value="ECO:0000315"/>
    <property type="project" value="CGD"/>
</dbReference>
<dbReference type="GO" id="GO:0044011">
    <property type="term" value="P:single-species biofilm formation on inanimate substrate"/>
    <property type="evidence" value="ECO:0000315"/>
    <property type="project" value="CGD"/>
</dbReference>
<dbReference type="InterPro" id="IPR025928">
    <property type="entry name" value="Flocculin_t3_rpt"/>
</dbReference>
<dbReference type="PANTHER" id="PTHR10068">
    <property type="entry name" value="BONE MARROW PROTEOGLYCAN"/>
    <property type="match status" value="1"/>
</dbReference>
<dbReference type="PANTHER" id="PTHR10068:SF14">
    <property type="entry name" value="CELL WALL ADHESIN EAP1"/>
    <property type="match status" value="1"/>
</dbReference>
<dbReference type="Pfam" id="PF13928">
    <property type="entry name" value="Flocculin_t3"/>
    <property type="match status" value="2"/>
</dbReference>
<sequence>MKVSQILPLAGAISVASGFWIPDFSNKQNSNSYPGQYKGKGGYQDDCGDDYKKGYKSKTYSKVKPITSTDCTTPIQPTGTTTGYTKDVVESTSYTTDTAYTTTVITVTKCDGGSCSHTAVTTGVTIITVTTNDVITEYTTYCPLTSTPATESTPATESTPATESTPATESTPATESTPATESTPCTTSTETTPATESTPATESTPATESTPATESTPATESTPATESTPATESTPATESTPCTTSTETTPATESTASTETASSTPVESTVIVPSTTVITVSSCYEDKCSVSSVTTGVVTISSEETIYTTYCPITSSITIPVPNTSTPAAPGTPVESQPVIPGTETTPAAPGTPVESQPVIPGTETTPAAPGTPVESQPATTPVAPGTETTPAAPGTPVESQPATTPVAPGTETTPAAPGTPVESQPVIPGTETTPAAPGTPVESQPATTPVAPGTETTPAAPGTPVESQPVIPGTETTPAAPGTPVESQPATTPVAPGTETTPAAPGTPVESQPVIPGTETTPAAPGTPGTEATPVTTQPVSVLSTSQVVTASGEFSTVTAHSTSIVASCPEGGCVPEGQQTETSPSVPTNGPEVEASSSVLSIPVSSVTTSTIASSSETSVPPAQVSTFEGSGSALKKPYYGLAVAALVYFM</sequence>
<gene>
    <name type="primary">EAP1</name>
    <name type="synonym">PGA47</name>
    <name type="ordered locus">CAALFM_C209530WA</name>
    <name type="ORF">CaO19.1401</name>
    <name type="ORF">CaO19.8979</name>
</gene>
<feature type="signal peptide" evidence="1">
    <location>
        <begin position="1"/>
        <end position="18"/>
    </location>
</feature>
<feature type="chain" id="PRO_0000424809" description="Cell wall adhesin EAP1">
    <location>
        <begin position="19"/>
        <end position="632"/>
    </location>
</feature>
<feature type="propeptide" id="PRO_0000424810" description="Removed in mature form" evidence="1">
    <location>
        <begin position="633"/>
        <end position="653"/>
    </location>
</feature>
<feature type="repeat" description="1-1">
    <location>
        <begin position="147"/>
        <end position="152"/>
    </location>
</feature>
<feature type="repeat" description="1-2">
    <location>
        <begin position="153"/>
        <end position="158"/>
    </location>
</feature>
<feature type="repeat" description="1-3">
    <location>
        <begin position="159"/>
        <end position="164"/>
    </location>
</feature>
<feature type="repeat" description="1-4">
    <location>
        <begin position="165"/>
        <end position="170"/>
    </location>
</feature>
<feature type="repeat" description="1-5">
    <location>
        <begin position="171"/>
        <end position="176"/>
    </location>
</feature>
<feature type="repeat" description="1-6">
    <location>
        <begin position="177"/>
        <end position="182"/>
    </location>
</feature>
<feature type="repeat" description="1-7">
    <location>
        <begin position="192"/>
        <end position="197"/>
    </location>
</feature>
<feature type="repeat" description="1-8">
    <location>
        <begin position="198"/>
        <end position="203"/>
    </location>
</feature>
<feature type="repeat" description="1-9">
    <location>
        <begin position="204"/>
        <end position="209"/>
    </location>
</feature>
<feature type="repeat" description="1-10">
    <location>
        <begin position="210"/>
        <end position="215"/>
    </location>
</feature>
<feature type="repeat" description="1-11">
    <location>
        <begin position="216"/>
        <end position="221"/>
    </location>
</feature>
<feature type="repeat" description="1-12">
    <location>
        <begin position="222"/>
        <end position="227"/>
    </location>
</feature>
<feature type="repeat" description="1-13">
    <location>
        <begin position="228"/>
        <end position="233"/>
    </location>
</feature>
<feature type="repeat" description="1-14">
    <location>
        <begin position="234"/>
        <end position="248"/>
    </location>
</feature>
<feature type="repeat" description="1-15">
    <location>
        <begin position="249"/>
        <end position="254"/>
    </location>
</feature>
<feature type="repeat" description="2-1">
    <location>
        <begin position="326"/>
        <end position="345"/>
    </location>
</feature>
<feature type="repeat" description="2-2">
    <location>
        <begin position="346"/>
        <end position="365"/>
    </location>
</feature>
<feature type="repeat" description="2-3">
    <location>
        <begin position="366"/>
        <end position="389"/>
    </location>
</feature>
<feature type="repeat" description="2-4">
    <location>
        <begin position="390"/>
        <end position="413"/>
    </location>
</feature>
<feature type="repeat" description="2-5">
    <location>
        <begin position="414"/>
        <end position="433"/>
    </location>
</feature>
<feature type="repeat" description="2-6">
    <location>
        <begin position="434"/>
        <end position="457"/>
    </location>
</feature>
<feature type="repeat" description="2-7">
    <location>
        <begin position="458"/>
        <end position="477"/>
    </location>
</feature>
<feature type="repeat" description="2-8">
    <location>
        <begin position="478"/>
        <end position="501"/>
    </location>
</feature>
<feature type="repeat" description="2-9">
    <location>
        <begin position="502"/>
        <end position="521"/>
    </location>
</feature>
<feature type="repeat" description="2-10">
    <location>
        <begin position="522"/>
        <end position="541"/>
    </location>
</feature>
<feature type="region of interest" description="N-terminal cell-cell adhesion domain">
    <location>
        <begin position="19"/>
        <end position="146"/>
    </location>
</feature>
<feature type="region of interest" description="Disordered" evidence="2">
    <location>
        <begin position="144"/>
        <end position="267"/>
    </location>
</feature>
<feature type="region of interest" description="15 X 6 AA tandem repeats, Ser/Thr-rich">
    <location>
        <begin position="147"/>
        <end position="254"/>
    </location>
</feature>
<feature type="region of interest" description="Disordered" evidence="2">
    <location>
        <begin position="324"/>
        <end position="540"/>
    </location>
</feature>
<feature type="region of interest" description="10 X 20 AA approximate tandem repeats">
    <location>
        <begin position="326"/>
        <end position="541"/>
    </location>
</feature>
<feature type="region of interest" description="Disordered" evidence="2">
    <location>
        <begin position="572"/>
        <end position="595"/>
    </location>
</feature>
<feature type="compositionally biased region" description="Low complexity" evidence="2">
    <location>
        <begin position="145"/>
        <end position="267"/>
    </location>
</feature>
<feature type="compositionally biased region" description="Low complexity" evidence="2">
    <location>
        <begin position="341"/>
        <end position="353"/>
    </location>
</feature>
<feature type="compositionally biased region" description="Low complexity" evidence="2">
    <location>
        <begin position="361"/>
        <end position="538"/>
    </location>
</feature>
<feature type="compositionally biased region" description="Polar residues" evidence="2">
    <location>
        <begin position="579"/>
        <end position="590"/>
    </location>
</feature>
<feature type="lipid moiety-binding region" description="GPI-anchor amidated glycine" evidence="1">
    <location>
        <position position="632"/>
    </location>
</feature>
<feature type="glycosylation site" description="N-linked (GlcNAc...) asparagine" evidence="1">
    <location>
        <position position="323"/>
    </location>
</feature>
<reference key="1">
    <citation type="journal article" date="2004" name="Proc. Natl. Acad. Sci. U.S.A.">
        <title>The diploid genome sequence of Candida albicans.</title>
        <authorList>
            <person name="Jones T."/>
            <person name="Federspiel N.A."/>
            <person name="Chibana H."/>
            <person name="Dungan J."/>
            <person name="Kalman S."/>
            <person name="Magee B.B."/>
            <person name="Newport G."/>
            <person name="Thorstenson Y.R."/>
            <person name="Agabian N."/>
            <person name="Magee P.T."/>
            <person name="Davis R.W."/>
            <person name="Scherer S."/>
        </authorList>
    </citation>
    <scope>NUCLEOTIDE SEQUENCE [LARGE SCALE GENOMIC DNA]</scope>
    <source>
        <strain>SC5314 / ATCC MYA-2876</strain>
    </source>
</reference>
<reference key="2">
    <citation type="journal article" date="2007" name="Genome Biol.">
        <title>Assembly of the Candida albicans genome into sixteen supercontigs aligned on the eight chromosomes.</title>
        <authorList>
            <person name="van het Hoog M."/>
            <person name="Rast T.J."/>
            <person name="Martchenko M."/>
            <person name="Grindle S."/>
            <person name="Dignard D."/>
            <person name="Hogues H."/>
            <person name="Cuomo C."/>
            <person name="Berriman M."/>
            <person name="Scherer S."/>
            <person name="Magee B.B."/>
            <person name="Whiteway M."/>
            <person name="Chibana H."/>
            <person name="Nantel A."/>
            <person name="Magee P.T."/>
        </authorList>
    </citation>
    <scope>GENOME REANNOTATION</scope>
    <source>
        <strain>SC5314 / ATCC MYA-2876</strain>
    </source>
</reference>
<reference key="3">
    <citation type="journal article" date="2013" name="Genome Biol.">
        <title>Assembly of a phased diploid Candida albicans genome facilitates allele-specific measurements and provides a simple model for repeat and indel structure.</title>
        <authorList>
            <person name="Muzzey D."/>
            <person name="Schwartz K."/>
            <person name="Weissman J.S."/>
            <person name="Sherlock G."/>
        </authorList>
    </citation>
    <scope>NUCLEOTIDE SEQUENCE [LARGE SCALE GENOMIC DNA]</scope>
    <scope>GENOME REANNOTATION</scope>
    <source>
        <strain>SC5314 / ATCC MYA-2876</strain>
    </source>
</reference>
<reference key="4">
    <citation type="journal article" date="2003" name="Eukaryot. Cell">
        <title>EAP1, a Candida albicans gene involved in binding human epithelial cells.</title>
        <authorList>
            <person name="Li F."/>
            <person name="Palecek S.P."/>
        </authorList>
    </citation>
    <scope>FUNCTION</scope>
    <scope>INDUCTION</scope>
</reference>
<reference key="5">
    <citation type="journal article" date="2003" name="Yeast">
        <title>Genome-wide identification of fungal GPI proteins.</title>
        <authorList>
            <person name="De Groot P.W."/>
            <person name="Hellingwerf K.J."/>
            <person name="Klis F.M."/>
        </authorList>
    </citation>
    <scope>PREDICTION OF GPI-ANCHOR</scope>
</reference>
<reference key="6">
    <citation type="journal article" date="2004" name="Mol. Microbiol.">
        <title>Regulatory networks affected by iron availability in Candida albicans.</title>
        <authorList>
            <person name="Lan C.Y."/>
            <person name="Rodarte G."/>
            <person name="Murillo L.A."/>
            <person name="Jones T."/>
            <person name="Davis R.W."/>
            <person name="Dungan J."/>
            <person name="Newport G."/>
            <person name="Agabian N."/>
        </authorList>
    </citation>
    <scope>INDUCTION</scope>
</reference>
<reference key="7">
    <citation type="journal article" date="2005" name="Biotechnol. Prog.">
        <title>Identification of Candida albicans genes that induce Saccharomyces cerevisiae cell adhesion and morphogenesis.</title>
        <authorList>
            <person name="Li F."/>
            <person name="Palecek S.P."/>
        </authorList>
    </citation>
    <scope>FUNCTION</scope>
</reference>
<reference key="8">
    <citation type="journal article" date="2007" name="Eukaryot. Cell">
        <title>Eap1p, an adhesin that mediates Candida albicans biofilm formation in vitro and in vivo.</title>
        <authorList>
            <person name="Li F."/>
            <person name="Svarovsky M.J."/>
            <person name="Karlsson A.J."/>
            <person name="Wagner J.P."/>
            <person name="Marchillo K."/>
            <person name="Oshel P."/>
            <person name="Andes D."/>
            <person name="Palecek S.P."/>
        </authorList>
    </citation>
    <scope>SUBCELLULAR LOCATION</scope>
    <scope>GPI-ANCHOR</scope>
    <scope>FUNCTION</scope>
    <scope>INDUCTION</scope>
</reference>
<reference key="9">
    <citation type="journal article" date="2008" name="Microbiology">
        <title>Distinct domains of the Candida albicans adhesin Eap1p mediate cell-cell and cell-substrate interactions.</title>
        <authorList>
            <person name="Li F."/>
            <person name="Palecek S.P."/>
        </authorList>
    </citation>
    <scope>SUBCELLULAR LOCATION</scope>
    <scope>FUNCTION</scope>
    <scope>DOMAIN</scope>
</reference>
<reference key="10">
    <citation type="journal article" date="2009" name="PLoS Pathog.">
        <title>Genes selectively up-regulated by pheromone in white cells are involved in biofilm formation in Candida albicans.</title>
        <authorList>
            <person name="Sahni N."/>
            <person name="Yi S."/>
            <person name="Daniels K.J."/>
            <person name="Srikantha T."/>
            <person name="Pujol C."/>
            <person name="Soll D.R."/>
        </authorList>
    </citation>
    <scope>INDUCTION</scope>
</reference>
<reference key="11">
    <citation type="journal article" date="2010" name="Eukaryot. Cell">
        <title>Heterologous expression of Candida albicans cell wall-associated adhesins in Saccharomyces cerevisiae Reveals differential specificities in adherence and biofilm formation and in binding oral Streptococcus gordonii.</title>
        <authorList>
            <person name="Nobbs A.H."/>
            <person name="Vickerman M.M."/>
            <person name="Jenkinson H.F."/>
        </authorList>
    </citation>
    <scope>FUNCTION</scope>
</reference>
<reference key="12">
    <citation type="journal article" date="2011" name="J. Med. Microbiol.">
        <title>Detailed comparison of Candida albicans and Candida glabrata biofilms under different conditions and their susceptibility to caspofungin and anidulafungin.</title>
        <authorList>
            <person name="Kucharikova S."/>
            <person name="Tournu H."/>
            <person name="Lagrou K."/>
            <person name="Van Dijck P."/>
            <person name="Bujdakova H."/>
        </authorList>
    </citation>
    <scope>INDUCTION</scope>
</reference>
<reference key="13">
    <citation type="journal article" date="2013" name="Eukaryot. Cell">
        <title>Identification of genes upregulated by the transcription factor Bcr1 that are involved in impermeability, impenetrability, and drug resistance of Candida albicans a/alpha biofilms.</title>
        <authorList>
            <person name="Srikantha T."/>
            <person name="Daniels K.J."/>
            <person name="Pujol C."/>
            <person name="Kim E."/>
            <person name="Soll D.R."/>
        </authorList>
    </citation>
    <scope>INDUCTION</scope>
</reference>
<reference key="14">
    <citation type="journal article" date="2013" name="Microb. Pathog.">
        <title>BDSF inhibits Candida albicans adherence to urinary catheters.</title>
        <authorList>
            <person name="Tian J."/>
            <person name="Weng L.X."/>
            <person name="Zhang Y.Q."/>
            <person name="Wang L.H."/>
        </authorList>
    </citation>
    <scope>INDUCTION</scope>
</reference>
<reference key="15">
    <citation type="journal article" date="2013" name="PLoS ONE">
        <title>Human serum promotes Candida albicans biofilm growth and virulence gene expression on silicone biomaterial.</title>
        <authorList>
            <person name="Samaranayake Y.H."/>
            <person name="Cheung B.P."/>
            <person name="Yau J.Y."/>
            <person name="Yeung S.K."/>
            <person name="Samaranayake L.P."/>
        </authorList>
    </citation>
    <scope>INDUCTION</scope>
</reference>
<evidence type="ECO:0000255" key="1"/>
<evidence type="ECO:0000256" key="2">
    <source>
        <dbReference type="SAM" id="MobiDB-lite"/>
    </source>
</evidence>
<evidence type="ECO:0000269" key="3">
    <source>
    </source>
</evidence>
<evidence type="ECO:0000269" key="4">
    <source>
    </source>
</evidence>
<evidence type="ECO:0000269" key="5">
    <source>
    </source>
</evidence>
<evidence type="ECO:0000269" key="6">
    <source>
    </source>
</evidence>
<evidence type="ECO:0000269" key="7">
    <source>
    </source>
</evidence>
<evidence type="ECO:0000269" key="8">
    <source>
    </source>
</evidence>
<evidence type="ECO:0000269" key="9">
    <source>
    </source>
</evidence>
<evidence type="ECO:0000269" key="10">
    <source>
    </source>
</evidence>
<evidence type="ECO:0000269" key="11">
    <source>
    </source>
</evidence>
<evidence type="ECO:0000269" key="12">
    <source>
    </source>
</evidence>
<evidence type="ECO:0000269" key="13">
    <source>
    </source>
</evidence>
<evidence type="ECO:0000305" key="14"/>
<protein>
    <recommendedName>
        <fullName>Cell wall adhesin EAP1</fullName>
    </recommendedName>
    <alternativeName>
        <fullName>Enhanced adherence to polystyrene protein 1</fullName>
    </alternativeName>
    <alternativeName>
        <fullName>GPI-anchored protein 47</fullName>
    </alternativeName>
</protein>
<accession>G1UBC2</accession>
<accession>A0A1D8PID9</accession>
<accession>G1UB13</accession>
<organism>
    <name type="scientific">Candida albicans (strain SC5314 / ATCC MYA-2876)</name>
    <name type="common">Yeast</name>
    <dbReference type="NCBI Taxonomy" id="237561"/>
    <lineage>
        <taxon>Eukaryota</taxon>
        <taxon>Fungi</taxon>
        <taxon>Dikarya</taxon>
        <taxon>Ascomycota</taxon>
        <taxon>Saccharomycotina</taxon>
        <taxon>Pichiomycetes</taxon>
        <taxon>Debaryomycetaceae</taxon>
        <taxon>Candida/Lodderomyces clade</taxon>
        <taxon>Candida</taxon>
    </lineage>
</organism>
<keyword id="KW-0130">Cell adhesion</keyword>
<keyword id="KW-0134">Cell wall</keyword>
<keyword id="KW-0325">Glycoprotein</keyword>
<keyword id="KW-0336">GPI-anchor</keyword>
<keyword id="KW-0449">Lipoprotein</keyword>
<keyword id="KW-0472">Membrane</keyword>
<keyword id="KW-1185">Reference proteome</keyword>
<keyword id="KW-0677">Repeat</keyword>
<keyword id="KW-0964">Secreted</keyword>
<keyword id="KW-0732">Signal</keyword>
<keyword id="KW-0843">Virulence</keyword>
<comment type="function">
    <text evidence="3 5 6 7 9">Cell wall protein which mediates cell-cell and cell-substrate adhesion. Required for biofilm formation and plays a role in virulence.</text>
</comment>
<comment type="subcellular location">
    <subcellularLocation>
        <location evidence="6 7">Secreted</location>
        <location evidence="6 7">Cell wall</location>
    </subcellularLocation>
    <subcellularLocation>
        <location evidence="14">Membrane</location>
        <topology evidence="14">Lipid-anchor</topology>
        <topology evidence="14">GPI-anchor</topology>
    </subcellularLocation>
</comment>
<comment type="induction">
    <text evidence="3 4 6 8 10 11 12 13">Expressed in white cells. Transcription is regulated by the transcription factor EFG1 and up-regulated by alpha-pheromone, by host serum, in biofilms, and in high iron conditions. Repressed by BCR1 in a/a biofilms.</text>
</comment>
<comment type="domain">
    <text evidence="7">The N-terminal domain mediates haploid invasive growth and yeast cell-cell adhesion.</text>
</comment>
<comment type="domain">
    <text evidence="7">The regions containing tandem repeats are required to project the N-terminal region into the extracellular environment and to mediate adhesion to polystyrene and to host cells. In allele CaO19.8979, the N-terminal tandem repeat region is expended and contains up to 90 repeats and the C-terminal tandem repeat region has one more repeat.</text>
</comment>
<comment type="PTM">
    <text>The GPI-anchor is attached to the protein in the endoplasmic reticulum and serves to target the protein to the cell surface. There, the glucosamine-inositol phospholipid moiety is cleaved off and the GPI-modified mannoprotein is covalently attached via its lipidless GPI glycan remnant to the 1,6-beta-glucan of the outer cell wall layer.</text>
</comment>
<comment type="similarity">
    <text evidence="14">Belongs to the PGA18 family.</text>
</comment>